<keyword id="KW-0067">ATP-binding</keyword>
<keyword id="KW-0436">Ligase</keyword>
<keyword id="KW-0460">Magnesium</keyword>
<keyword id="KW-0464">Manganese</keyword>
<keyword id="KW-0479">Metal-binding</keyword>
<keyword id="KW-0547">Nucleotide-binding</keyword>
<keyword id="KW-0648">Protein biosynthesis</keyword>
<name>RIMK_COXB2</name>
<dbReference type="EC" id="6.3.2.-" evidence="1"/>
<dbReference type="EMBL" id="CP001019">
    <property type="protein sequence ID" value="ACJ17840.1"/>
    <property type="molecule type" value="Genomic_DNA"/>
</dbReference>
<dbReference type="RefSeq" id="WP_005769646.1">
    <property type="nucleotide sequence ID" value="NC_011527.1"/>
</dbReference>
<dbReference type="SMR" id="B6J433"/>
<dbReference type="KEGG" id="cbg:CbuG_0410"/>
<dbReference type="HOGENOM" id="CLU_054353_0_1_6"/>
<dbReference type="GO" id="GO:0005737">
    <property type="term" value="C:cytoplasm"/>
    <property type="evidence" value="ECO:0007669"/>
    <property type="project" value="TreeGrafter"/>
</dbReference>
<dbReference type="GO" id="GO:0005524">
    <property type="term" value="F:ATP binding"/>
    <property type="evidence" value="ECO:0007669"/>
    <property type="project" value="UniProtKB-UniRule"/>
</dbReference>
<dbReference type="GO" id="GO:0046872">
    <property type="term" value="F:metal ion binding"/>
    <property type="evidence" value="ECO:0007669"/>
    <property type="project" value="UniProtKB-KW"/>
</dbReference>
<dbReference type="GO" id="GO:0018169">
    <property type="term" value="F:ribosomal S6-glutamic acid ligase activity"/>
    <property type="evidence" value="ECO:0007669"/>
    <property type="project" value="TreeGrafter"/>
</dbReference>
<dbReference type="GO" id="GO:0036211">
    <property type="term" value="P:protein modification process"/>
    <property type="evidence" value="ECO:0007669"/>
    <property type="project" value="InterPro"/>
</dbReference>
<dbReference type="GO" id="GO:0009432">
    <property type="term" value="P:SOS response"/>
    <property type="evidence" value="ECO:0007669"/>
    <property type="project" value="TreeGrafter"/>
</dbReference>
<dbReference type="GO" id="GO:0006412">
    <property type="term" value="P:translation"/>
    <property type="evidence" value="ECO:0007669"/>
    <property type="project" value="UniProtKB-KW"/>
</dbReference>
<dbReference type="FunFam" id="3.40.50.20:FF:000004">
    <property type="entry name" value="Probable alpha-L-glutamate ligase"/>
    <property type="match status" value="1"/>
</dbReference>
<dbReference type="FunFam" id="3.30.1490.20:FF:000005">
    <property type="entry name" value="Probable alpha-L-glutamate ligase 1"/>
    <property type="match status" value="1"/>
</dbReference>
<dbReference type="FunFam" id="3.30.470.20:FF:000016">
    <property type="entry name" value="Ribosomal protein S6--L-glutamate ligase"/>
    <property type="match status" value="1"/>
</dbReference>
<dbReference type="Gene3D" id="3.40.50.20">
    <property type="match status" value="1"/>
</dbReference>
<dbReference type="Gene3D" id="3.30.1490.20">
    <property type="entry name" value="ATP-grasp fold, A domain"/>
    <property type="match status" value="1"/>
</dbReference>
<dbReference type="Gene3D" id="3.30.470.20">
    <property type="entry name" value="ATP-grasp fold, B domain"/>
    <property type="match status" value="1"/>
</dbReference>
<dbReference type="HAMAP" id="MF_01552">
    <property type="entry name" value="RimK"/>
    <property type="match status" value="1"/>
</dbReference>
<dbReference type="InterPro" id="IPR011761">
    <property type="entry name" value="ATP-grasp"/>
</dbReference>
<dbReference type="InterPro" id="IPR013651">
    <property type="entry name" value="ATP-grasp_RimK-type"/>
</dbReference>
<dbReference type="InterPro" id="IPR013815">
    <property type="entry name" value="ATP_grasp_subdomain_1"/>
</dbReference>
<dbReference type="InterPro" id="IPR023533">
    <property type="entry name" value="RimK"/>
</dbReference>
<dbReference type="InterPro" id="IPR041107">
    <property type="entry name" value="Rimk_N"/>
</dbReference>
<dbReference type="InterPro" id="IPR004666">
    <property type="entry name" value="Rp_bS6_RimK/Lys_biosynth_LsyX"/>
</dbReference>
<dbReference type="NCBIfam" id="NF007764">
    <property type="entry name" value="PRK10446.1"/>
    <property type="match status" value="1"/>
</dbReference>
<dbReference type="NCBIfam" id="TIGR00768">
    <property type="entry name" value="rimK_fam"/>
    <property type="match status" value="1"/>
</dbReference>
<dbReference type="PANTHER" id="PTHR21621:SF7">
    <property type="entry name" value="RIBOSOMAL PROTEIN BS6--L-GLUTAMATE LIGASE"/>
    <property type="match status" value="1"/>
</dbReference>
<dbReference type="PANTHER" id="PTHR21621">
    <property type="entry name" value="RIBOSOMAL PROTEIN S6 MODIFICATION PROTEIN"/>
    <property type="match status" value="1"/>
</dbReference>
<dbReference type="Pfam" id="PF08443">
    <property type="entry name" value="RimK"/>
    <property type="match status" value="1"/>
</dbReference>
<dbReference type="Pfam" id="PF18030">
    <property type="entry name" value="Rimk_N"/>
    <property type="match status" value="1"/>
</dbReference>
<dbReference type="SUPFAM" id="SSF56059">
    <property type="entry name" value="Glutathione synthetase ATP-binding domain-like"/>
    <property type="match status" value="1"/>
</dbReference>
<dbReference type="PROSITE" id="PS50975">
    <property type="entry name" value="ATP_GRASP"/>
    <property type="match status" value="1"/>
</dbReference>
<comment type="cofactor">
    <cofactor evidence="1">
        <name>Mg(2+)</name>
        <dbReference type="ChEBI" id="CHEBI:18420"/>
    </cofactor>
    <cofactor evidence="1">
        <name>Mn(2+)</name>
        <dbReference type="ChEBI" id="CHEBI:29035"/>
    </cofactor>
    <text evidence="1">Binds 2 magnesium or manganese ions per subunit.</text>
</comment>
<comment type="similarity">
    <text evidence="1">Belongs to the RimK family.</text>
</comment>
<proteinExistence type="inferred from homology"/>
<accession>B6J433</accession>
<gene>
    <name evidence="1" type="primary">rimK</name>
    <name type="ordered locus">CbuG_0410</name>
</gene>
<reference key="1">
    <citation type="journal article" date="2009" name="Infect. Immun.">
        <title>Comparative genomics reveal extensive transposon-mediated genomic plasticity and diversity among potential effector proteins within the genus Coxiella.</title>
        <authorList>
            <person name="Beare P.A."/>
            <person name="Unsworth N."/>
            <person name="Andoh M."/>
            <person name="Voth D.E."/>
            <person name="Omsland A."/>
            <person name="Gilk S.D."/>
            <person name="Williams K.P."/>
            <person name="Sobral B.W."/>
            <person name="Kupko J.J. III"/>
            <person name="Porcella S.F."/>
            <person name="Samuel J.E."/>
            <person name="Heinzen R.A."/>
        </authorList>
    </citation>
    <scope>NUCLEOTIDE SEQUENCE [LARGE SCALE GENOMIC DNA]</scope>
    <source>
        <strain>CbuG_Q212</strain>
    </source>
</reference>
<protein>
    <recommendedName>
        <fullName evidence="1">Probable alpha-L-glutamate ligase</fullName>
        <ecNumber evidence="1">6.3.2.-</ecNumber>
    </recommendedName>
</protein>
<evidence type="ECO:0000255" key="1">
    <source>
        <dbReference type="HAMAP-Rule" id="MF_01552"/>
    </source>
</evidence>
<organism>
    <name type="scientific">Coxiella burnetii (strain CbuG_Q212)</name>
    <name type="common">Coxiella burnetii (strain Q212)</name>
    <dbReference type="NCBI Taxonomy" id="434923"/>
    <lineage>
        <taxon>Bacteria</taxon>
        <taxon>Pseudomonadati</taxon>
        <taxon>Pseudomonadota</taxon>
        <taxon>Gammaproteobacteria</taxon>
        <taxon>Legionellales</taxon>
        <taxon>Coxiellaceae</taxon>
        <taxon>Coxiella</taxon>
    </lineage>
</organism>
<feature type="chain" id="PRO_1000194361" description="Probable alpha-L-glutamate ligase">
    <location>
        <begin position="1"/>
        <end position="301"/>
    </location>
</feature>
<feature type="domain" description="ATP-grasp" evidence="1">
    <location>
        <begin position="104"/>
        <end position="287"/>
    </location>
</feature>
<feature type="binding site" evidence="1">
    <location>
        <position position="141"/>
    </location>
    <ligand>
        <name>ATP</name>
        <dbReference type="ChEBI" id="CHEBI:30616"/>
    </ligand>
</feature>
<feature type="binding site" evidence="1">
    <location>
        <begin position="178"/>
        <end position="179"/>
    </location>
    <ligand>
        <name>ATP</name>
        <dbReference type="ChEBI" id="CHEBI:30616"/>
    </ligand>
</feature>
<feature type="binding site" evidence="1">
    <location>
        <position position="187"/>
    </location>
    <ligand>
        <name>ATP</name>
        <dbReference type="ChEBI" id="CHEBI:30616"/>
    </ligand>
</feature>
<feature type="binding site" evidence="1">
    <location>
        <begin position="211"/>
        <end position="213"/>
    </location>
    <ligand>
        <name>ATP</name>
        <dbReference type="ChEBI" id="CHEBI:30616"/>
    </ligand>
</feature>
<feature type="binding site" evidence="1">
    <location>
        <position position="248"/>
    </location>
    <ligand>
        <name>Mg(2+)</name>
        <dbReference type="ChEBI" id="CHEBI:18420"/>
        <label>1</label>
    </ligand>
</feature>
<feature type="binding site" evidence="1">
    <location>
        <position position="248"/>
    </location>
    <ligand>
        <name>Mn(2+)</name>
        <dbReference type="ChEBI" id="CHEBI:29035"/>
        <label>1</label>
    </ligand>
</feature>
<feature type="binding site" evidence="1">
    <location>
        <position position="260"/>
    </location>
    <ligand>
        <name>Mg(2+)</name>
        <dbReference type="ChEBI" id="CHEBI:18420"/>
        <label>1</label>
    </ligand>
</feature>
<feature type="binding site" evidence="1">
    <location>
        <position position="260"/>
    </location>
    <ligand>
        <name>Mg(2+)</name>
        <dbReference type="ChEBI" id="CHEBI:18420"/>
        <label>2</label>
    </ligand>
</feature>
<feature type="binding site" evidence="1">
    <location>
        <position position="260"/>
    </location>
    <ligand>
        <name>Mn(2+)</name>
        <dbReference type="ChEBI" id="CHEBI:29035"/>
        <label>1</label>
    </ligand>
</feature>
<feature type="binding site" evidence="1">
    <location>
        <position position="260"/>
    </location>
    <ligand>
        <name>Mn(2+)</name>
        <dbReference type="ChEBI" id="CHEBI:29035"/>
        <label>2</label>
    </ligand>
</feature>
<feature type="binding site" evidence="1">
    <location>
        <position position="262"/>
    </location>
    <ligand>
        <name>Mg(2+)</name>
        <dbReference type="ChEBI" id="CHEBI:18420"/>
        <label>2</label>
    </ligand>
</feature>
<feature type="binding site" evidence="1">
    <location>
        <position position="262"/>
    </location>
    <ligand>
        <name>Mn(2+)</name>
        <dbReference type="ChEBI" id="CHEBI:29035"/>
        <label>2</label>
    </ligand>
</feature>
<sequence length="301" mass="33192">MKIAILSTKQELSSTQRLKEAALARGHKVKIINTLRCYMSLSQEKPTIHYMGKELARYDAVIPRIGASITFYGTAVVRQFEMMGTFCLNSSMSITRSRDKFRSLQFLSRKGIDLPITGFAHSPDDIEDLIQMVGGTPLIIKLIEGTQGIGVVLAETKKAAESVIQAFLGLKVNILIQEFIGETQGRDIRCFVIGNKVVATMQREARPGDFRSNVHRGGTTKLIKITPQEREISINAAKALGLNVAGVDLLRSKRGPLVLEVNSSPGLEGIENITKKDIAGMIIEFIEKNAKPIKAYSRYQG</sequence>